<keyword id="KW-1003">Cell membrane</keyword>
<keyword id="KW-0472">Membrane</keyword>
<keyword id="KW-0812">Transmembrane</keyword>
<keyword id="KW-1133">Transmembrane helix</keyword>
<reference key="1">
    <citation type="journal article" date="2004" name="J. Infect. Dis.">
        <title>Progress toward characterization of the group A Streptococcus metagenome: complete genome sequence of a macrolide-resistant serotype M6 strain.</title>
        <authorList>
            <person name="Banks D.J."/>
            <person name="Porcella S.F."/>
            <person name="Barbian K.D."/>
            <person name="Beres S.B."/>
            <person name="Philips L.E."/>
            <person name="Voyich J.M."/>
            <person name="DeLeo F.R."/>
            <person name="Martin J.M."/>
            <person name="Somerville G.A."/>
            <person name="Musser J.M."/>
        </authorList>
    </citation>
    <scope>NUCLEOTIDE SEQUENCE [LARGE SCALE GENOMIC DNA]</scope>
    <source>
        <strain>ATCC BAA-946 / MGAS10394</strain>
    </source>
</reference>
<accession>Q5XCC9</accession>
<comment type="subcellular location">
    <subcellularLocation>
        <location evidence="2">Cell membrane</location>
        <topology evidence="2">Multi-pass membrane protein</topology>
    </subcellularLocation>
</comment>
<comment type="similarity">
    <text evidence="2">Belongs to the UPF0324 family.</text>
</comment>
<feature type="chain" id="PRO_0000157466" description="UPF0324 membrane protein M6_Spy0799">
    <location>
        <begin position="1"/>
        <end position="339"/>
    </location>
</feature>
<feature type="transmembrane region" description="Helical" evidence="1">
    <location>
        <begin position="7"/>
        <end position="24"/>
    </location>
</feature>
<feature type="transmembrane region" description="Helical" evidence="1">
    <location>
        <begin position="28"/>
        <end position="50"/>
    </location>
</feature>
<feature type="transmembrane region" description="Helical" evidence="1">
    <location>
        <begin position="57"/>
        <end position="79"/>
    </location>
</feature>
<feature type="transmembrane region" description="Helical" evidence="1">
    <location>
        <begin position="84"/>
        <end position="106"/>
    </location>
</feature>
<feature type="transmembrane region" description="Helical" evidence="1">
    <location>
        <begin position="118"/>
        <end position="140"/>
    </location>
</feature>
<feature type="transmembrane region" description="Helical" evidence="1">
    <location>
        <begin position="150"/>
        <end position="172"/>
    </location>
</feature>
<feature type="transmembrane region" description="Helical" evidence="1">
    <location>
        <begin position="256"/>
        <end position="275"/>
    </location>
</feature>
<feature type="transmembrane region" description="Helical" evidence="1">
    <location>
        <begin position="290"/>
        <end position="307"/>
    </location>
</feature>
<feature type="transmembrane region" description="Helical" evidence="1">
    <location>
        <begin position="314"/>
        <end position="336"/>
    </location>
</feature>
<gene>
    <name type="ordered locus">M6_Spy0799</name>
</gene>
<sequence length="339" mass="36178">MSTHLRKLPGLLLCLLLALPAWYLGRLFPIIGAPVFAILLGMLLALFYEHRDKTKEGISFTSKYILQTAVVLLGFGLNLTQVMAVGMQSLPIIISTIATALLVAYGSQKWLRIDVNTATLVGVGSSICGGSAIAATAPVIKAKDDEVAKAISVIFLFNMLAALLFPSLGQLLGLSNEGFAIFAGTAVNDTSSVTATATAWDALHHSNTLDGATIVKLTRTLAILPITLGLSLYRAKKEHDIVTEEGFSLRKSFPRFILFFLLASLITTLMISLGVSADVFHSLKTLSKFFIVMAMAAIGLNTNLVKLIKTGGQAILLGAICWVAITLVSLAMQLSLGIW</sequence>
<organism>
    <name type="scientific">Streptococcus pyogenes serotype M6 (strain ATCC BAA-946 / MGAS10394)</name>
    <dbReference type="NCBI Taxonomy" id="286636"/>
    <lineage>
        <taxon>Bacteria</taxon>
        <taxon>Bacillati</taxon>
        <taxon>Bacillota</taxon>
        <taxon>Bacilli</taxon>
        <taxon>Lactobacillales</taxon>
        <taxon>Streptococcaceae</taxon>
        <taxon>Streptococcus</taxon>
    </lineage>
</organism>
<name>Y799_STRP6</name>
<evidence type="ECO:0000255" key="1"/>
<evidence type="ECO:0000305" key="2"/>
<proteinExistence type="inferred from homology"/>
<protein>
    <recommendedName>
        <fullName>UPF0324 membrane protein M6_Spy0799</fullName>
    </recommendedName>
</protein>
<dbReference type="EMBL" id="CP000003">
    <property type="protein sequence ID" value="AAT86934.1"/>
    <property type="molecule type" value="Genomic_DNA"/>
</dbReference>
<dbReference type="RefSeq" id="WP_011184473.1">
    <property type="nucleotide sequence ID" value="NC_006086.1"/>
</dbReference>
<dbReference type="KEGG" id="spa:M6_Spy0799"/>
<dbReference type="HOGENOM" id="CLU_033541_2_1_9"/>
<dbReference type="Proteomes" id="UP000001167">
    <property type="component" value="Chromosome"/>
</dbReference>
<dbReference type="GO" id="GO:0005886">
    <property type="term" value="C:plasma membrane"/>
    <property type="evidence" value="ECO:0007669"/>
    <property type="project" value="UniProtKB-SubCell"/>
</dbReference>
<dbReference type="InterPro" id="IPR018383">
    <property type="entry name" value="UPF0324_pro"/>
</dbReference>
<dbReference type="PANTHER" id="PTHR30106">
    <property type="entry name" value="INNER MEMBRANE PROTEIN YEIH-RELATED"/>
    <property type="match status" value="1"/>
</dbReference>
<dbReference type="PANTHER" id="PTHR30106:SF1">
    <property type="entry name" value="UPF0324 MEMBRANE PROTEIN FN0533"/>
    <property type="match status" value="1"/>
</dbReference>
<dbReference type="Pfam" id="PF03601">
    <property type="entry name" value="Cons_hypoth698"/>
    <property type="match status" value="1"/>
</dbReference>